<protein>
    <recommendedName>
        <fullName>Malate dehydrogenase [NADP], chloroplastic</fullName>
        <ecNumber>1.1.1.82</ecNumber>
    </recommendedName>
    <alternativeName>
        <fullName>NADP-MDH</fullName>
    </alternativeName>
</protein>
<name>MDHP_PEA</name>
<accession>P21528</accession>
<evidence type="ECO:0000250" key="1"/>
<evidence type="ECO:0000255" key="2">
    <source>
        <dbReference type="PROSITE-ProRule" id="PRU10004"/>
    </source>
</evidence>
<evidence type="ECO:0000269" key="3">
    <source>
    </source>
</evidence>
<evidence type="ECO:0000269" key="4">
    <source>
    </source>
</evidence>
<evidence type="ECO:0000305" key="5"/>
<sequence>MALTQLNSTCSKPQLHSSSQLSFLSRTRTRTLPRHYHSTFAPLHRTQHARISCSVAPNQVQVPAAQTQDPKGKPDCYGVFCLTYDLKAEEETKSWKKLINIAVSGAAGMISNHLLFKLASGEVFGPDQPIALKLLGSERSIQALEGVAMELEDSLFPLLREVVISIDPYEVFQDAEWALLIGAKPRGPGVERAALLDINGQIFAEQGKALNAVASRNAKVIVVGNPCNTNALICLKNAPNIPAKNFHALTRLDENRAKCQLALKAGVFYDKVSNMTIWGNHSTTQVPDFLNARIDGLPVKEVIKDNKWLEEEFTEKVQKRGGVLIQKWGRSSAASTSVSIVDAIRSLITPTPEGDWFSSGVYTNGNPYGIAEDIVFSMPCRSKGDGDYELVNDVIFDDYLRQKLAKTEAELLAEKKCVAHLTGEGIAVCDLPGDTMLPGEM</sequence>
<proteinExistence type="evidence at protein level"/>
<dbReference type="EC" id="1.1.1.82"/>
<dbReference type="EMBL" id="X74507">
    <property type="protein sequence ID" value="CAA52614.1"/>
    <property type="molecule type" value="mRNA"/>
</dbReference>
<dbReference type="PIR" id="S38346">
    <property type="entry name" value="S38346"/>
</dbReference>
<dbReference type="RefSeq" id="NP_001413907.1">
    <property type="nucleotide sequence ID" value="NM_001426978.1"/>
</dbReference>
<dbReference type="SMR" id="P21528"/>
<dbReference type="IntAct" id="P21528">
    <property type="interactions" value="1"/>
</dbReference>
<dbReference type="MINT" id="P21528"/>
<dbReference type="GeneID" id="127098517"/>
<dbReference type="OrthoDB" id="4069699at2759"/>
<dbReference type="SABIO-RK" id="P21528"/>
<dbReference type="GO" id="GO:0009507">
    <property type="term" value="C:chloroplast"/>
    <property type="evidence" value="ECO:0007669"/>
    <property type="project" value="UniProtKB-SubCell"/>
</dbReference>
<dbReference type="GO" id="GO:0046554">
    <property type="term" value="F:L-malate dehydrogenase (NADP+) activity"/>
    <property type="evidence" value="ECO:0007669"/>
    <property type="project" value="UniProtKB-EC"/>
</dbReference>
<dbReference type="GO" id="GO:0006108">
    <property type="term" value="P:malate metabolic process"/>
    <property type="evidence" value="ECO:0007669"/>
    <property type="project" value="InterPro"/>
</dbReference>
<dbReference type="CDD" id="cd01338">
    <property type="entry name" value="MDH_chloroplast-like"/>
    <property type="match status" value="1"/>
</dbReference>
<dbReference type="FunFam" id="3.90.110.10:FF:000002">
    <property type="entry name" value="Malate dehydrogenase"/>
    <property type="match status" value="1"/>
</dbReference>
<dbReference type="FunFam" id="3.40.50.720:FF:000144">
    <property type="entry name" value="Malate dehydrogenase [NADP]"/>
    <property type="match status" value="1"/>
</dbReference>
<dbReference type="Gene3D" id="3.90.110.10">
    <property type="entry name" value="Lactate dehydrogenase/glycoside hydrolase, family 4, C-terminal"/>
    <property type="match status" value="1"/>
</dbReference>
<dbReference type="Gene3D" id="3.40.50.720">
    <property type="entry name" value="NAD(P)-binding Rossmann-like Domain"/>
    <property type="match status" value="1"/>
</dbReference>
<dbReference type="InterPro" id="IPR022383">
    <property type="entry name" value="Lactate/malate_DH_C"/>
</dbReference>
<dbReference type="InterPro" id="IPR001236">
    <property type="entry name" value="Lactate/malate_DH_N"/>
</dbReference>
<dbReference type="InterPro" id="IPR015955">
    <property type="entry name" value="Lactate_DH/Glyco_Ohase_4_C"/>
</dbReference>
<dbReference type="InterPro" id="IPR001252">
    <property type="entry name" value="Malate_DH_AS"/>
</dbReference>
<dbReference type="InterPro" id="IPR011273">
    <property type="entry name" value="Malate_DH_NADP-dep_pln"/>
</dbReference>
<dbReference type="InterPro" id="IPR010945">
    <property type="entry name" value="Malate_DH_type2"/>
</dbReference>
<dbReference type="InterPro" id="IPR036291">
    <property type="entry name" value="NAD(P)-bd_dom_sf"/>
</dbReference>
<dbReference type="NCBIfam" id="TIGR01757">
    <property type="entry name" value="Malate-DH_plant"/>
    <property type="match status" value="1"/>
</dbReference>
<dbReference type="NCBIfam" id="TIGR01759">
    <property type="entry name" value="MalateDH-SF1"/>
    <property type="match status" value="1"/>
</dbReference>
<dbReference type="NCBIfam" id="NF003916">
    <property type="entry name" value="PRK05442.1"/>
    <property type="match status" value="1"/>
</dbReference>
<dbReference type="PANTHER" id="PTHR23382">
    <property type="entry name" value="MALATE DEHYDROGENASE"/>
    <property type="match status" value="1"/>
</dbReference>
<dbReference type="Pfam" id="PF02866">
    <property type="entry name" value="Ldh_1_C"/>
    <property type="match status" value="1"/>
</dbReference>
<dbReference type="Pfam" id="PF00056">
    <property type="entry name" value="Ldh_1_N"/>
    <property type="match status" value="1"/>
</dbReference>
<dbReference type="SUPFAM" id="SSF56327">
    <property type="entry name" value="LDH C-terminal domain-like"/>
    <property type="match status" value="1"/>
</dbReference>
<dbReference type="SUPFAM" id="SSF51735">
    <property type="entry name" value="NAD(P)-binding Rossmann-fold domains"/>
    <property type="match status" value="1"/>
</dbReference>
<dbReference type="PROSITE" id="PS00068">
    <property type="entry name" value="MDH"/>
    <property type="match status" value="1"/>
</dbReference>
<keyword id="KW-0150">Chloroplast</keyword>
<keyword id="KW-0903">Direct protein sequencing</keyword>
<keyword id="KW-1015">Disulfide bond</keyword>
<keyword id="KW-0521">NADP</keyword>
<keyword id="KW-0560">Oxidoreductase</keyword>
<keyword id="KW-0934">Plastid</keyword>
<keyword id="KW-0809">Transit peptide</keyword>
<feature type="transit peptide" description="Chloroplast" evidence="3">
    <location>
        <begin position="1"/>
        <end position="58"/>
    </location>
</feature>
<feature type="chain" id="PRO_0000018646" description="Malate dehydrogenase [NADP], chloroplastic">
    <location>
        <begin position="59"/>
        <end position="441"/>
    </location>
</feature>
<feature type="active site" description="Proton acceptor" evidence="1">
    <location>
        <position position="281"/>
    </location>
</feature>
<feature type="binding site" evidence="1">
    <location>
        <begin position="105"/>
        <end position="111"/>
    </location>
    <ligand>
        <name>NADP(+)</name>
        <dbReference type="ChEBI" id="CHEBI:58349"/>
    </ligand>
</feature>
<feature type="binding site" evidence="2">
    <location>
        <position position="186"/>
    </location>
    <ligand>
        <name>substrate</name>
    </ligand>
</feature>
<feature type="binding site" evidence="2">
    <location>
        <position position="192"/>
    </location>
    <ligand>
        <name>substrate</name>
    </ligand>
</feature>
<feature type="binding site" evidence="1">
    <location>
        <position position="199"/>
    </location>
    <ligand>
        <name>NADP(+)</name>
        <dbReference type="ChEBI" id="CHEBI:58349"/>
    </ligand>
</feature>
<feature type="binding site" evidence="1">
    <location>
        <position position="206"/>
    </location>
    <ligand>
        <name>NAD(+)</name>
        <dbReference type="ChEBI" id="CHEBI:57540"/>
    </ligand>
</feature>
<feature type="binding site" evidence="1">
    <location>
        <begin position="223"/>
        <end position="225"/>
    </location>
    <ligand>
        <name>NADP(+)</name>
        <dbReference type="ChEBI" id="CHEBI:58349"/>
    </ligand>
</feature>
<feature type="binding site" evidence="2">
    <location>
        <position position="225"/>
    </location>
    <ligand>
        <name>substrate</name>
    </ligand>
</feature>
<feature type="binding site" evidence="2">
    <location>
        <position position="256"/>
    </location>
    <ligand>
        <name>substrate</name>
    </ligand>
</feature>
<feature type="site" description="Activation of NADP-MDH">
    <location>
        <position position="76"/>
    </location>
</feature>
<feature type="site" description="Activation of NADP-MDH">
    <location>
        <position position="81"/>
    </location>
</feature>
<feature type="disulfide bond" description="In oxidized inactive NAD-MDH" evidence="4">
    <location>
        <begin position="76"/>
        <end position="81"/>
    </location>
</feature>
<feature type="disulfide bond" description="In oxidized inactive NAD-MDH" evidence="1">
    <location>
        <begin position="417"/>
        <end position="429"/>
    </location>
</feature>
<feature type="sequence conflict" description="In Ref. 2; AA sequence." evidence="5" ref="2">
    <original>E</original>
    <variation>T</variation>
    <location>
        <position position="90"/>
    </location>
</feature>
<feature type="sequence conflict" description="In Ref. 3; AA sequence." evidence="5" ref="3">
    <original>C</original>
    <variation>M</variation>
    <location>
        <position position="234"/>
    </location>
</feature>
<feature type="sequence conflict" description="In Ref. 3; AA sequence." evidence="5" ref="3">
    <original>P</original>
    <variation>K</variation>
    <location>
        <position position="287"/>
    </location>
</feature>
<feature type="sequence conflict" description="In Ref. 2; AA sequence." evidence="5" ref="2">
    <original>I</original>
    <variation>L</variation>
    <location>
        <position position="294"/>
    </location>
</feature>
<feature type="sequence conflict" description="In Ref. 2; AA sequence." evidence="5" ref="2">
    <original>L</original>
    <variation>I</variation>
    <location>
        <position position="297"/>
    </location>
</feature>
<feature type="sequence conflict" description="In Ref. 2; AA sequence." evidence="5" ref="2">
    <original>N</original>
    <variation>V</variation>
    <location>
        <position position="366"/>
    </location>
</feature>
<feature type="sequence conflict" description="In Ref. 2; AA sequence." evidence="5" ref="2">
    <original>S</original>
    <variation>G</variation>
    <location>
        <position position="377"/>
    </location>
</feature>
<organism>
    <name type="scientific">Pisum sativum</name>
    <name type="common">Garden pea</name>
    <name type="synonym">Lathyrus oleraceus</name>
    <dbReference type="NCBI Taxonomy" id="3888"/>
    <lineage>
        <taxon>Eukaryota</taxon>
        <taxon>Viridiplantae</taxon>
        <taxon>Streptophyta</taxon>
        <taxon>Embryophyta</taxon>
        <taxon>Tracheophyta</taxon>
        <taxon>Spermatophyta</taxon>
        <taxon>Magnoliopsida</taxon>
        <taxon>eudicotyledons</taxon>
        <taxon>Gunneridae</taxon>
        <taxon>Pentapetalae</taxon>
        <taxon>rosids</taxon>
        <taxon>fabids</taxon>
        <taxon>Fabales</taxon>
        <taxon>Fabaceae</taxon>
        <taxon>Papilionoideae</taxon>
        <taxon>50 kb inversion clade</taxon>
        <taxon>NPAAA clade</taxon>
        <taxon>Hologalegina</taxon>
        <taxon>IRL clade</taxon>
        <taxon>Fabeae</taxon>
        <taxon>Pisum</taxon>
    </lineage>
</organism>
<comment type="function">
    <text>The chloroplastic, NADP-dependent form is essential for the photosynthesis C4 cycle, which allows plants to circumvent the problem of photorespiration. In C4 plants, NADP-MDH activity acts to convert oxaloacetate to malate in chloroplasts of mesophyll cells for transport to the bundle sheath cells.</text>
</comment>
<comment type="catalytic activity">
    <reaction>
        <text>(S)-malate + NADP(+) = oxaloacetate + NADPH + H(+)</text>
        <dbReference type="Rhea" id="RHEA:10824"/>
        <dbReference type="ChEBI" id="CHEBI:15378"/>
        <dbReference type="ChEBI" id="CHEBI:15589"/>
        <dbReference type="ChEBI" id="CHEBI:16452"/>
        <dbReference type="ChEBI" id="CHEBI:57783"/>
        <dbReference type="ChEBI" id="CHEBI:58349"/>
        <dbReference type="EC" id="1.1.1.82"/>
    </reaction>
</comment>
<comment type="activity regulation">
    <text>Chloroplast NADP-MDH is activated upon illumination. In order to be enzymatically active, disulfide bridges on the protein must be reduced by thioredoxin which receives electrons from ferredoxin and the electron transport system of photosynthesis.</text>
</comment>
<comment type="subunit">
    <text evidence="3">Homodimer.</text>
</comment>
<comment type="subcellular location">
    <subcellularLocation>
        <location>Plastid</location>
        <location>Chloroplast</location>
    </subcellularLocation>
</comment>
<comment type="similarity">
    <text evidence="5">Belongs to the LDH/MDH superfamily. MDH type 2 family.</text>
</comment>
<reference key="1">
    <citation type="journal article" date="1993" name="Eur. J. Biochem.">
        <title>Cloning, site-specific mutagenesis, expression and characterization of full-length chloroplast NADP-malate dehydrogenase from Pisum sativum.</title>
        <authorList>
            <person name="Reng W."/>
            <person name="Riessland R."/>
            <person name="Scheibe R."/>
            <person name="Jaenicke R."/>
        </authorList>
    </citation>
    <scope>NUCLEOTIDE SEQUENCE [MRNA]</scope>
</reference>
<reference key="2">
    <citation type="journal article" date="1991" name="Biochim. Biophys. Acta">
        <title>Primary structure and analysis of the location of the regulatory disulfide bond of pea chloroplast NADP-malate dehydrogenase.</title>
        <authorList>
            <person name="Scheibe R."/>
            <person name="Kampfenkel K."/>
            <person name="Wessels R."/>
            <person name="Tripier D."/>
        </authorList>
    </citation>
    <scope>PROTEIN SEQUENCE OF 65-441</scope>
    <scope>DISULFIDE BOND</scope>
    <source>
        <strain>cv. Kleine Rheinlaenderin</strain>
    </source>
</reference>
<reference key="3">
    <citation type="journal article" date="1987" name="Eur. J. Biochem.">
        <title>Amino acid sequence similarity between malate dehydrogenases (NAD) and pea chloroplast malate dehydrogenase (NADP).</title>
        <authorList>
            <person name="Fickenscher K."/>
            <person name="Scheibe R."/>
            <person name="Marcus F."/>
        </authorList>
    </citation>
    <scope>PARTIAL PROTEIN SEQUENCE</scope>
</reference>
<reference key="4">
    <citation type="journal article" date="1992" name="Biochim. Biophys. Acta">
        <title>Limited proteolysis of NADP-malate dehydrogenase from pea chloroplast by aminopeptidase K yields monomers. Evidence of proteolytic degradation of NADP-malate dehydrogenase during purification from pea.</title>
        <authorList>
            <person name="Kampfenkel K."/>
        </authorList>
    </citation>
    <scope>PROTEIN SEQUENCE OF 59-74 AND 92-112</scope>
    <scope>SUBUNIT</scope>
    <source>
        <strain>cv. Kleine Rheinlaenderin</strain>
    </source>
</reference>